<organism>
    <name type="scientific">Gallus gallus</name>
    <name type="common">Chicken</name>
    <dbReference type="NCBI Taxonomy" id="9031"/>
    <lineage>
        <taxon>Eukaryota</taxon>
        <taxon>Metazoa</taxon>
        <taxon>Chordata</taxon>
        <taxon>Craniata</taxon>
        <taxon>Vertebrata</taxon>
        <taxon>Euteleostomi</taxon>
        <taxon>Archelosauria</taxon>
        <taxon>Archosauria</taxon>
        <taxon>Dinosauria</taxon>
        <taxon>Saurischia</taxon>
        <taxon>Theropoda</taxon>
        <taxon>Coelurosauria</taxon>
        <taxon>Aves</taxon>
        <taxon>Neognathae</taxon>
        <taxon>Galloanserae</taxon>
        <taxon>Galliformes</taxon>
        <taxon>Phasianidae</taxon>
        <taxon>Phasianinae</taxon>
        <taxon>Gallus</taxon>
    </lineage>
</organism>
<protein>
    <recommendedName>
        <fullName>Tyrosine-protein phosphatase non-receptor type 11</fullName>
        <ecNumber evidence="2">3.1.3.48</ecNumber>
    </recommendedName>
    <alternativeName>
        <fullName>SH-PTP2</fullName>
        <shortName>cSH-PTP2</shortName>
    </alternativeName>
</protein>
<name>PTN11_CHICK</name>
<accession>Q90687</accession>
<feature type="chain" id="PRO_0000094770" description="Tyrosine-protein phosphatase non-receptor type 11">
    <location>
        <begin position="1"/>
        <end position="593"/>
    </location>
</feature>
<feature type="domain" description="SH2 1" evidence="4 8">
    <location>
        <begin position="6"/>
        <end position="102"/>
    </location>
</feature>
<feature type="domain" description="SH2 2" evidence="4 8">
    <location>
        <begin position="112"/>
        <end position="216"/>
    </location>
</feature>
<feature type="domain" description="Tyrosine-protein phosphatase" evidence="3">
    <location>
        <begin position="247"/>
        <end position="521"/>
    </location>
</feature>
<feature type="region of interest" description="Disordered" evidence="6">
    <location>
        <begin position="548"/>
        <end position="575"/>
    </location>
</feature>
<feature type="compositionally biased region" description="Polar residues" evidence="6">
    <location>
        <begin position="548"/>
        <end position="557"/>
    </location>
</feature>
<feature type="compositionally biased region" description="Pro residues" evidence="6">
    <location>
        <begin position="559"/>
        <end position="568"/>
    </location>
</feature>
<feature type="active site" description="Phosphocysteine intermediate" evidence="3 5">
    <location>
        <position position="459"/>
    </location>
</feature>
<feature type="binding site" evidence="1">
    <location>
        <position position="425"/>
    </location>
    <ligand>
        <name>substrate</name>
    </ligand>
</feature>
<feature type="binding site" evidence="1">
    <location>
        <begin position="459"/>
        <end position="465"/>
    </location>
    <ligand>
        <name>substrate</name>
    </ligand>
</feature>
<feature type="binding site" evidence="1">
    <location>
        <position position="506"/>
    </location>
    <ligand>
        <name>substrate</name>
    </ligand>
</feature>
<gene>
    <name type="primary">PTPN11</name>
</gene>
<dbReference type="EC" id="3.1.3.48" evidence="2"/>
<dbReference type="EMBL" id="U38620">
    <property type="protein sequence ID" value="AAC60049.1"/>
    <property type="molecule type" value="mRNA"/>
</dbReference>
<dbReference type="PIR" id="JC5167">
    <property type="entry name" value="JC5167"/>
</dbReference>
<dbReference type="RefSeq" id="NP_990299.1">
    <property type="nucleotide sequence ID" value="NM_204968.2"/>
</dbReference>
<dbReference type="SMR" id="Q90687"/>
<dbReference type="FunCoup" id="Q90687">
    <property type="interactions" value="2784"/>
</dbReference>
<dbReference type="STRING" id="9031.ENSGALP00000007692"/>
<dbReference type="GlyGen" id="Q90687">
    <property type="glycosylation" value="1 site"/>
</dbReference>
<dbReference type="PaxDb" id="9031-ENSGALP00000007692"/>
<dbReference type="Ensembl" id="ENSGALT00010050025.1">
    <property type="protein sequence ID" value="ENSGALP00010029554.1"/>
    <property type="gene ID" value="ENSGALG00010020701.1"/>
</dbReference>
<dbReference type="GeneID" id="395815"/>
<dbReference type="KEGG" id="gga:395815"/>
<dbReference type="CTD" id="5781"/>
<dbReference type="VEuPathDB" id="HostDB:geneid_395815"/>
<dbReference type="eggNOG" id="KOG0790">
    <property type="taxonomic scope" value="Eukaryota"/>
</dbReference>
<dbReference type="GeneTree" id="ENSGT00940000153876"/>
<dbReference type="HOGENOM" id="CLU_001645_9_10_1"/>
<dbReference type="InParanoid" id="Q90687"/>
<dbReference type="OMA" id="ESMAYKQ"/>
<dbReference type="OrthoDB" id="8815311at2759"/>
<dbReference type="PhylomeDB" id="Q90687"/>
<dbReference type="Reactome" id="R-GGA-1059683">
    <property type="pathway name" value="Interleukin-6 signaling"/>
</dbReference>
<dbReference type="Reactome" id="R-GGA-109704">
    <property type="pathway name" value="PI3K Cascade"/>
</dbReference>
<dbReference type="Reactome" id="R-GGA-1257604">
    <property type="pathway name" value="PIP3 activates AKT signaling"/>
</dbReference>
<dbReference type="Reactome" id="R-GGA-1433557">
    <property type="pathway name" value="Signaling by SCF-KIT"/>
</dbReference>
<dbReference type="Reactome" id="R-GGA-180292">
    <property type="pathway name" value="GAB1 signalosome"/>
</dbReference>
<dbReference type="Reactome" id="R-GGA-186763">
    <property type="pathway name" value="Downstream signal transduction"/>
</dbReference>
<dbReference type="Reactome" id="R-GGA-210990">
    <property type="pathway name" value="PECAM1 interactions"/>
</dbReference>
<dbReference type="Reactome" id="R-GGA-210993">
    <property type="pathway name" value="Tie2 Signaling"/>
</dbReference>
<dbReference type="Reactome" id="R-GGA-389513">
    <property type="pathway name" value="Co-inhibition by CTLA4"/>
</dbReference>
<dbReference type="Reactome" id="R-GGA-389948">
    <property type="pathway name" value="Co-inhibition by PD-1"/>
</dbReference>
<dbReference type="Reactome" id="R-GGA-432142">
    <property type="pathway name" value="Platelet sensitization by LDL"/>
</dbReference>
<dbReference type="Reactome" id="R-GGA-512988">
    <property type="pathway name" value="Interleukin-3, Interleukin-5 and GM-CSF signaling"/>
</dbReference>
<dbReference type="Reactome" id="R-GGA-5654689">
    <property type="pathway name" value="PI-3K cascade:FGFR1"/>
</dbReference>
<dbReference type="Reactome" id="R-GGA-5654693">
    <property type="pathway name" value="FRS-mediated FGFR1 signaling"/>
</dbReference>
<dbReference type="Reactome" id="R-GGA-5654695">
    <property type="pathway name" value="PI-3K cascade:FGFR2"/>
</dbReference>
<dbReference type="Reactome" id="R-GGA-5654700">
    <property type="pathway name" value="FRS-mediated FGFR2 signaling"/>
</dbReference>
<dbReference type="Reactome" id="R-GGA-5654706">
    <property type="pathway name" value="FRS-mediated FGFR3 signaling"/>
</dbReference>
<dbReference type="Reactome" id="R-GGA-5654710">
    <property type="pathway name" value="PI-3K cascade:FGFR3"/>
</dbReference>
<dbReference type="Reactome" id="R-GGA-5654712">
    <property type="pathway name" value="FRS-mediated FGFR4 signaling"/>
</dbReference>
<dbReference type="Reactome" id="R-GGA-5654720">
    <property type="pathway name" value="PI-3K cascade:FGFR4"/>
</dbReference>
<dbReference type="Reactome" id="R-GGA-5654726">
    <property type="pathway name" value="Negative regulation of FGFR1 signaling"/>
</dbReference>
<dbReference type="Reactome" id="R-GGA-5654727">
    <property type="pathway name" value="Negative regulation of FGFR2 signaling"/>
</dbReference>
<dbReference type="Reactome" id="R-GGA-5654732">
    <property type="pathway name" value="Negative regulation of FGFR3 signaling"/>
</dbReference>
<dbReference type="Reactome" id="R-GGA-5654733">
    <property type="pathway name" value="Negative regulation of FGFR4 signaling"/>
</dbReference>
<dbReference type="Reactome" id="R-GGA-6811558">
    <property type="pathway name" value="PI5P, PP2A and IER3 Regulate PI3K/AKT Signaling"/>
</dbReference>
<dbReference type="Reactome" id="R-GGA-8853659">
    <property type="pathway name" value="RET signaling"/>
</dbReference>
<dbReference type="Reactome" id="R-GGA-8854691">
    <property type="pathway name" value="Interleukin-20 family signaling"/>
</dbReference>
<dbReference type="Reactome" id="R-GGA-8865999">
    <property type="pathway name" value="MET activates PTPN11"/>
</dbReference>
<dbReference type="Reactome" id="R-GGA-8934593">
    <property type="pathway name" value="Regulation of RUNX1 Expression and Activity"/>
</dbReference>
<dbReference type="Reactome" id="R-GGA-912694">
    <property type="pathway name" value="Regulation of IFNA/IFNB signaling"/>
</dbReference>
<dbReference type="Reactome" id="R-GGA-936964">
    <property type="pathway name" value="Activation of IRF3, IRF7 mediated by TBK1, IKKEpsilon (IKBKE)"/>
</dbReference>
<dbReference type="Reactome" id="R-GGA-9674555">
    <property type="pathway name" value="Signaling by CSF3 (G-CSF)"/>
</dbReference>
<dbReference type="PRO" id="PR:Q90687"/>
<dbReference type="Proteomes" id="UP000000539">
    <property type="component" value="Chromosome 15"/>
</dbReference>
<dbReference type="Bgee" id="ENSGALG00000004821">
    <property type="expression patterns" value="Expressed in brain and 14 other cell types or tissues"/>
</dbReference>
<dbReference type="GO" id="GO:0005737">
    <property type="term" value="C:cytoplasm"/>
    <property type="evidence" value="ECO:0000250"/>
    <property type="project" value="UniProtKB"/>
</dbReference>
<dbReference type="GO" id="GO:0005634">
    <property type="term" value="C:nucleus"/>
    <property type="evidence" value="ECO:0000250"/>
    <property type="project" value="UniProtKB"/>
</dbReference>
<dbReference type="GO" id="GO:0050839">
    <property type="term" value="F:cell adhesion molecule binding"/>
    <property type="evidence" value="ECO:0000318"/>
    <property type="project" value="GO_Central"/>
</dbReference>
<dbReference type="GO" id="GO:0004726">
    <property type="term" value="F:non-membrane spanning protein tyrosine phosphatase activity"/>
    <property type="evidence" value="ECO:0000318"/>
    <property type="project" value="GO_Central"/>
</dbReference>
<dbReference type="GO" id="GO:0004725">
    <property type="term" value="F:protein tyrosine phosphatase activity"/>
    <property type="evidence" value="ECO:0000250"/>
    <property type="project" value="UniProtKB"/>
</dbReference>
<dbReference type="GO" id="GO:0030971">
    <property type="term" value="F:receptor tyrosine kinase binding"/>
    <property type="evidence" value="ECO:0000318"/>
    <property type="project" value="GO_Central"/>
</dbReference>
<dbReference type="GO" id="GO:0071364">
    <property type="term" value="P:cellular response to epidermal growth factor stimulus"/>
    <property type="evidence" value="ECO:0000250"/>
    <property type="project" value="UniProtKB"/>
</dbReference>
<dbReference type="GO" id="GO:0038127">
    <property type="term" value="P:ERBB signaling pathway"/>
    <property type="evidence" value="ECO:0000318"/>
    <property type="project" value="GO_Central"/>
</dbReference>
<dbReference type="GO" id="GO:0032331">
    <property type="term" value="P:negative regulation of chondrocyte differentiation"/>
    <property type="evidence" value="ECO:0000250"/>
    <property type="project" value="UniProtKB"/>
</dbReference>
<dbReference type="GO" id="GO:0070374">
    <property type="term" value="P:positive regulation of ERK1 and ERK2 cascade"/>
    <property type="evidence" value="ECO:0000250"/>
    <property type="project" value="UniProtKB"/>
</dbReference>
<dbReference type="GO" id="GO:0045778">
    <property type="term" value="P:positive regulation of ossification"/>
    <property type="evidence" value="ECO:0000250"/>
    <property type="project" value="UniProtKB"/>
</dbReference>
<dbReference type="CDD" id="cd14605">
    <property type="entry name" value="PTPc-N11"/>
    <property type="match status" value="1"/>
</dbReference>
<dbReference type="CDD" id="cd09931">
    <property type="entry name" value="SH2_C-SH2_SHP_like"/>
    <property type="match status" value="1"/>
</dbReference>
<dbReference type="CDD" id="cd10340">
    <property type="entry name" value="SH2_N-SH2_SHP_like"/>
    <property type="match status" value="1"/>
</dbReference>
<dbReference type="FunFam" id="3.30.505.10:FF:000012">
    <property type="entry name" value="Tyrosine-protein phosphatase non-receptor type"/>
    <property type="match status" value="1"/>
</dbReference>
<dbReference type="FunFam" id="3.30.505.10:FF:000018">
    <property type="entry name" value="Tyrosine-protein phosphatase non-receptor type"/>
    <property type="match status" value="1"/>
</dbReference>
<dbReference type="FunFam" id="3.90.190.10:FF:000018">
    <property type="entry name" value="Tyrosine-protein phosphatase non-receptor type"/>
    <property type="match status" value="1"/>
</dbReference>
<dbReference type="Gene3D" id="3.90.190.10">
    <property type="entry name" value="Protein tyrosine phosphatase superfamily"/>
    <property type="match status" value="1"/>
</dbReference>
<dbReference type="Gene3D" id="3.30.505.10">
    <property type="entry name" value="SH2 domain"/>
    <property type="match status" value="2"/>
</dbReference>
<dbReference type="InterPro" id="IPR029021">
    <property type="entry name" value="Prot-tyrosine_phosphatase-like"/>
</dbReference>
<dbReference type="InterPro" id="IPR000242">
    <property type="entry name" value="PTP_cat"/>
</dbReference>
<dbReference type="InterPro" id="IPR000980">
    <property type="entry name" value="SH2"/>
</dbReference>
<dbReference type="InterPro" id="IPR036860">
    <property type="entry name" value="SH2_dom_sf"/>
</dbReference>
<dbReference type="InterPro" id="IPR016130">
    <property type="entry name" value="Tyr_Pase_AS"/>
</dbReference>
<dbReference type="InterPro" id="IPR003595">
    <property type="entry name" value="Tyr_Pase_cat"/>
</dbReference>
<dbReference type="InterPro" id="IPR000387">
    <property type="entry name" value="Tyr_Pase_dom"/>
</dbReference>
<dbReference type="InterPro" id="IPR012152">
    <property type="entry name" value="Tyr_Pase_non-rcpt_typ-6/11"/>
</dbReference>
<dbReference type="PANTHER" id="PTHR46559">
    <property type="entry name" value="TYROSINE-PROTEIN PHOSPHATASE NON-RECEPTOR TYPE 11"/>
    <property type="match status" value="1"/>
</dbReference>
<dbReference type="PANTHER" id="PTHR46559:SF1">
    <property type="entry name" value="TYROSINE-PROTEIN PHOSPHATASE NON-RECEPTOR TYPE 11"/>
    <property type="match status" value="1"/>
</dbReference>
<dbReference type="Pfam" id="PF00017">
    <property type="entry name" value="SH2"/>
    <property type="match status" value="2"/>
</dbReference>
<dbReference type="Pfam" id="PF00102">
    <property type="entry name" value="Y_phosphatase"/>
    <property type="match status" value="1"/>
</dbReference>
<dbReference type="PIRSF" id="PIRSF000929">
    <property type="entry name" value="Tyr-Ptase_nr_6"/>
    <property type="match status" value="1"/>
</dbReference>
<dbReference type="PRINTS" id="PR00700">
    <property type="entry name" value="PRTYPHPHTASE"/>
</dbReference>
<dbReference type="PRINTS" id="PR00401">
    <property type="entry name" value="SH2DOMAIN"/>
</dbReference>
<dbReference type="SMART" id="SM00194">
    <property type="entry name" value="PTPc"/>
    <property type="match status" value="1"/>
</dbReference>
<dbReference type="SMART" id="SM00404">
    <property type="entry name" value="PTPc_motif"/>
    <property type="match status" value="1"/>
</dbReference>
<dbReference type="SMART" id="SM00252">
    <property type="entry name" value="SH2"/>
    <property type="match status" value="2"/>
</dbReference>
<dbReference type="SUPFAM" id="SSF52799">
    <property type="entry name" value="(Phosphotyrosine protein) phosphatases II"/>
    <property type="match status" value="1"/>
</dbReference>
<dbReference type="SUPFAM" id="SSF55550">
    <property type="entry name" value="SH2 domain"/>
    <property type="match status" value="2"/>
</dbReference>
<dbReference type="PROSITE" id="PS50001">
    <property type="entry name" value="SH2"/>
    <property type="match status" value="2"/>
</dbReference>
<dbReference type="PROSITE" id="PS00383">
    <property type="entry name" value="TYR_PHOSPHATASE_1"/>
    <property type="match status" value="1"/>
</dbReference>
<dbReference type="PROSITE" id="PS50056">
    <property type="entry name" value="TYR_PHOSPHATASE_2"/>
    <property type="match status" value="1"/>
</dbReference>
<dbReference type="PROSITE" id="PS50055">
    <property type="entry name" value="TYR_PHOSPHATASE_PTP"/>
    <property type="match status" value="1"/>
</dbReference>
<proteinExistence type="evidence at transcript level"/>
<evidence type="ECO:0000250" key="1"/>
<evidence type="ECO:0000250" key="2">
    <source>
        <dbReference type="UniProtKB" id="Q06124"/>
    </source>
</evidence>
<evidence type="ECO:0000255" key="3">
    <source>
        <dbReference type="PROSITE-ProRule" id="PRU00160"/>
    </source>
</evidence>
<evidence type="ECO:0000255" key="4">
    <source>
        <dbReference type="PROSITE-ProRule" id="PRU00191"/>
    </source>
</evidence>
<evidence type="ECO:0000255" key="5">
    <source>
        <dbReference type="PROSITE-ProRule" id="PRU10044"/>
    </source>
</evidence>
<evidence type="ECO:0000256" key="6">
    <source>
        <dbReference type="SAM" id="MobiDB-lite"/>
    </source>
</evidence>
<evidence type="ECO:0000269" key="7">
    <source>
    </source>
</evidence>
<evidence type="ECO:0000305" key="8"/>
<reference evidence="8" key="1">
    <citation type="journal article" date="1996" name="Gene">
        <title>Cloning and expression of the chicken protein tyrosine phosphatase SH-PTP2.</title>
        <authorList>
            <person name="Park C.Y."/>
            <person name="LaMontagne K.R."/>
            <person name="Tonks N.K."/>
            <person name="Hayman M.J."/>
        </authorList>
    </citation>
    <scope>NUCLEOTIDE SEQUENCE [MRNA]</scope>
    <source>
        <tissue evidence="7">Erythroblast</tissue>
    </source>
</reference>
<sequence length="593" mass="67983">MTSRRWFHPNITGVEAENLLLTRGVDGSFLARPSKSNPGDFTLSVRRTGAVTHIKIQNTGDYYDLYGGEKFATLAELVQYYMEHHGQLKEKNGDVIELKYPLNCADPTSERWFHGHLSGREAEKLLTEKGKHGSFLVRESQSHPGDFVLSVRTGDDKGESNDGKSKVTHVMIHCQDLKYDVGGGEKFDSLTDLVEHYKKNPMVETLGTVLQLKQPLNTTRINAAEIESRVRELSKLAETTDKVKQGFWEEFETLQQQECKLLYSRKEGQRQENKNKNRYKNILPFDHTRVVLHDGDPNEPVSDYINANIIMPEFETKCNNSKPKKSYIATQGCLQNTVNDFWRMVFQENSRVIVMTTKEVERGKSKCVKYWPDEYSLKEYGVMRVRNVKESAAHDYTLRELKLSKVGQGNTERTVWQYHFRTWPDHGVPSDPGGVLDFLEEVHHKQESISDAGPVVVHCSAGIGRTGTFIVIDILIDIIREKGVDCDIDVPKTIQMVRSQRSGMVQTEAQYRFIYMAVQHYIETLQRRIEEEQKSKRKGHEYTNIKYSLSDQTSGDQSPLPPCTPTPTCPEMREDSARVYENVGLMQQQKSFR</sequence>
<comment type="function">
    <text evidence="2 7">This PTPase activity may directly link growth factor receptors and other signaling proteins through protein-tyrosine phosphorylation (By similarity). The SH2 regions may interact with other cellular components to modulate its own phosphatase activity against interacting substrates (By similarity). May play a positive role during the stages of erythroid cell proliferation (PubMed:8921851).</text>
</comment>
<comment type="catalytic activity">
    <reaction evidence="2 5">
        <text>O-phospho-L-tyrosyl-[protein] + H2O = L-tyrosyl-[protein] + phosphate</text>
        <dbReference type="Rhea" id="RHEA:10684"/>
        <dbReference type="Rhea" id="RHEA-COMP:10136"/>
        <dbReference type="Rhea" id="RHEA-COMP:20101"/>
        <dbReference type="ChEBI" id="CHEBI:15377"/>
        <dbReference type="ChEBI" id="CHEBI:43474"/>
        <dbReference type="ChEBI" id="CHEBI:46858"/>
        <dbReference type="ChEBI" id="CHEBI:61978"/>
        <dbReference type="EC" id="3.1.3.48"/>
    </reaction>
</comment>
<comment type="subcellular location">
    <subcellularLocation>
        <location evidence="1">Cytoplasm</location>
    </subcellularLocation>
</comment>
<comment type="tissue specificity">
    <text evidence="7">Expressed in embryonic fibroblast, hematopoietic, erythroid, myeloid and lymphoid cells.</text>
</comment>
<comment type="PTM">
    <text evidence="2">Phosphorylated by tyrosine-protein kinases.</text>
</comment>
<comment type="similarity">
    <text evidence="8">Belongs to the protein-tyrosine phosphatase family. Non-receptor class 2 subfamily.</text>
</comment>
<keyword id="KW-0963">Cytoplasm</keyword>
<keyword id="KW-0378">Hydrolase</keyword>
<keyword id="KW-0597">Phosphoprotein</keyword>
<keyword id="KW-0904">Protein phosphatase</keyword>
<keyword id="KW-1185">Reference proteome</keyword>
<keyword id="KW-0677">Repeat</keyword>
<keyword id="KW-0727">SH2 domain</keyword>